<evidence type="ECO:0000255" key="1">
    <source>
        <dbReference type="HAMAP-Rule" id="MF_00480"/>
    </source>
</evidence>
<evidence type="ECO:0000305" key="2"/>
<protein>
    <recommendedName>
        <fullName evidence="1">Small ribosomal subunit protein uS7</fullName>
    </recommendedName>
    <alternativeName>
        <fullName evidence="2">30S ribosomal protein S7</fullName>
    </alternativeName>
</protein>
<proteinExistence type="inferred from homology"/>
<gene>
    <name evidence="1" type="primary">rpsG</name>
    <name type="ordered locus">DR_0306</name>
</gene>
<reference key="1">
    <citation type="journal article" date="1999" name="Science">
        <title>Genome sequence of the radioresistant bacterium Deinococcus radiodurans R1.</title>
        <authorList>
            <person name="White O."/>
            <person name="Eisen J.A."/>
            <person name="Heidelberg J.F."/>
            <person name="Hickey E.K."/>
            <person name="Peterson J.D."/>
            <person name="Dodson R.J."/>
            <person name="Haft D.H."/>
            <person name="Gwinn M.L."/>
            <person name="Nelson W.C."/>
            <person name="Richardson D.L."/>
            <person name="Moffat K.S."/>
            <person name="Qin H."/>
            <person name="Jiang L."/>
            <person name="Pamphile W."/>
            <person name="Crosby M."/>
            <person name="Shen M."/>
            <person name="Vamathevan J.J."/>
            <person name="Lam P."/>
            <person name="McDonald L.A."/>
            <person name="Utterback T.R."/>
            <person name="Zalewski C."/>
            <person name="Makarova K.S."/>
            <person name="Aravind L."/>
            <person name="Daly M.J."/>
            <person name="Minton K.W."/>
            <person name="Fleischmann R.D."/>
            <person name="Ketchum K.A."/>
            <person name="Nelson K.E."/>
            <person name="Salzberg S.L."/>
            <person name="Smith H.O."/>
            <person name="Venter J.C."/>
            <person name="Fraser C.M."/>
        </authorList>
    </citation>
    <scope>NUCLEOTIDE SEQUENCE [LARGE SCALE GENOMIC DNA]</scope>
    <source>
        <strain>ATCC 13939 / DSM 20539 / JCM 16871 / CCUG 27074 / LMG 4051 / NBRC 15346 / NCIMB 9279 / VKM B-1422 / R1</strain>
    </source>
</reference>
<keyword id="KW-1185">Reference proteome</keyword>
<keyword id="KW-0687">Ribonucleoprotein</keyword>
<keyword id="KW-0689">Ribosomal protein</keyword>
<keyword id="KW-0694">RNA-binding</keyword>
<keyword id="KW-0699">rRNA-binding</keyword>
<keyword id="KW-0820">tRNA-binding</keyword>
<name>RS7_DEIRA</name>
<feature type="chain" id="PRO_0000124256" description="Small ribosomal subunit protein uS7">
    <location>
        <begin position="1"/>
        <end position="156"/>
    </location>
</feature>
<organism>
    <name type="scientific">Deinococcus radiodurans (strain ATCC 13939 / DSM 20539 / JCM 16871 / CCUG 27074 / LMG 4051 / NBRC 15346 / NCIMB 9279 / VKM B-1422 / R1)</name>
    <dbReference type="NCBI Taxonomy" id="243230"/>
    <lineage>
        <taxon>Bacteria</taxon>
        <taxon>Thermotogati</taxon>
        <taxon>Deinococcota</taxon>
        <taxon>Deinococci</taxon>
        <taxon>Deinococcales</taxon>
        <taxon>Deinococcaceae</taxon>
        <taxon>Deinococcus</taxon>
    </lineage>
</organism>
<sequence>MARRRRAEVRPVQPDLVYQDVLVSAMINRIMRDGKKNLASRIFYGACRLVQERTGQEPLKVFKQAYDNVKPRVEVRSRRVGGSTYQVPVEVGPRRQQSLTLRWMISAVDGRPERTAIERLAGEIMDAAQGRGGAIKKKDDVERMAEANRAYAHYRW</sequence>
<accession>Q9RXK6</accession>
<comment type="function">
    <text evidence="1">One of the primary rRNA binding proteins, it binds directly to 16S rRNA where it nucleates assembly of the head domain of the 30S subunit. Is located at the subunit interface close to the decoding center, probably blocks exit of the E-site tRNA.</text>
</comment>
<comment type="subunit">
    <text evidence="1">Part of the 30S ribosomal subunit. Contacts proteins S9 and S11.</text>
</comment>
<comment type="similarity">
    <text evidence="1">Belongs to the universal ribosomal protein uS7 family.</text>
</comment>
<dbReference type="EMBL" id="AE000513">
    <property type="protein sequence ID" value="AAF09886.1"/>
    <property type="molecule type" value="Genomic_DNA"/>
</dbReference>
<dbReference type="PIR" id="D75536">
    <property type="entry name" value="D75536"/>
</dbReference>
<dbReference type="RefSeq" id="NP_294029.1">
    <property type="nucleotide sequence ID" value="NC_001263.1"/>
</dbReference>
<dbReference type="RefSeq" id="WP_010886951.1">
    <property type="nucleotide sequence ID" value="NC_001263.1"/>
</dbReference>
<dbReference type="SMR" id="Q9RXK6"/>
<dbReference type="FunCoup" id="Q9RXK6">
    <property type="interactions" value="468"/>
</dbReference>
<dbReference type="STRING" id="243230.DR_0306"/>
<dbReference type="PaxDb" id="243230-DR_0306"/>
<dbReference type="EnsemblBacteria" id="AAF09886">
    <property type="protein sequence ID" value="AAF09886"/>
    <property type="gene ID" value="DR_0306"/>
</dbReference>
<dbReference type="GeneID" id="69516538"/>
<dbReference type="KEGG" id="dra:DR_0306"/>
<dbReference type="PATRIC" id="fig|243230.17.peg.472"/>
<dbReference type="eggNOG" id="COG0049">
    <property type="taxonomic scope" value="Bacteria"/>
</dbReference>
<dbReference type="HOGENOM" id="CLU_072226_1_1_0"/>
<dbReference type="InParanoid" id="Q9RXK6"/>
<dbReference type="OrthoDB" id="9807653at2"/>
<dbReference type="Proteomes" id="UP000002524">
    <property type="component" value="Chromosome 1"/>
</dbReference>
<dbReference type="GO" id="GO:0022627">
    <property type="term" value="C:cytosolic small ribosomal subunit"/>
    <property type="evidence" value="ECO:0000318"/>
    <property type="project" value="GO_Central"/>
</dbReference>
<dbReference type="GO" id="GO:0005840">
    <property type="term" value="C:ribosome"/>
    <property type="evidence" value="ECO:0000318"/>
    <property type="project" value="GO_Central"/>
</dbReference>
<dbReference type="GO" id="GO:0003729">
    <property type="term" value="F:mRNA binding"/>
    <property type="evidence" value="ECO:0000318"/>
    <property type="project" value="GO_Central"/>
</dbReference>
<dbReference type="GO" id="GO:0019843">
    <property type="term" value="F:rRNA binding"/>
    <property type="evidence" value="ECO:0000318"/>
    <property type="project" value="GO_Central"/>
</dbReference>
<dbReference type="GO" id="GO:0003735">
    <property type="term" value="F:structural constituent of ribosome"/>
    <property type="evidence" value="ECO:0000318"/>
    <property type="project" value="GO_Central"/>
</dbReference>
<dbReference type="GO" id="GO:0000049">
    <property type="term" value="F:tRNA binding"/>
    <property type="evidence" value="ECO:0007669"/>
    <property type="project" value="UniProtKB-UniRule"/>
</dbReference>
<dbReference type="GO" id="GO:0000028">
    <property type="term" value="P:ribosomal small subunit assembly"/>
    <property type="evidence" value="ECO:0000318"/>
    <property type="project" value="GO_Central"/>
</dbReference>
<dbReference type="GO" id="GO:0006412">
    <property type="term" value="P:translation"/>
    <property type="evidence" value="ECO:0000318"/>
    <property type="project" value="GO_Central"/>
</dbReference>
<dbReference type="CDD" id="cd14869">
    <property type="entry name" value="uS7_Bacteria"/>
    <property type="match status" value="1"/>
</dbReference>
<dbReference type="FunFam" id="1.10.455.10:FF:000001">
    <property type="entry name" value="30S ribosomal protein S7"/>
    <property type="match status" value="1"/>
</dbReference>
<dbReference type="Gene3D" id="1.10.455.10">
    <property type="entry name" value="Ribosomal protein S7 domain"/>
    <property type="match status" value="1"/>
</dbReference>
<dbReference type="HAMAP" id="MF_00480_B">
    <property type="entry name" value="Ribosomal_uS7_B"/>
    <property type="match status" value="1"/>
</dbReference>
<dbReference type="InterPro" id="IPR000235">
    <property type="entry name" value="Ribosomal_uS7"/>
</dbReference>
<dbReference type="InterPro" id="IPR005717">
    <property type="entry name" value="Ribosomal_uS7_bac/org-type"/>
</dbReference>
<dbReference type="InterPro" id="IPR020606">
    <property type="entry name" value="Ribosomal_uS7_CS"/>
</dbReference>
<dbReference type="InterPro" id="IPR023798">
    <property type="entry name" value="Ribosomal_uS7_dom"/>
</dbReference>
<dbReference type="InterPro" id="IPR036823">
    <property type="entry name" value="Ribosomal_uS7_dom_sf"/>
</dbReference>
<dbReference type="NCBIfam" id="TIGR01029">
    <property type="entry name" value="rpsG_bact"/>
    <property type="match status" value="1"/>
</dbReference>
<dbReference type="PANTHER" id="PTHR11205">
    <property type="entry name" value="RIBOSOMAL PROTEIN S7"/>
    <property type="match status" value="1"/>
</dbReference>
<dbReference type="Pfam" id="PF00177">
    <property type="entry name" value="Ribosomal_S7"/>
    <property type="match status" value="1"/>
</dbReference>
<dbReference type="PIRSF" id="PIRSF002122">
    <property type="entry name" value="RPS7p_RPS7a_RPS5e_RPS7o"/>
    <property type="match status" value="1"/>
</dbReference>
<dbReference type="SUPFAM" id="SSF47973">
    <property type="entry name" value="Ribosomal protein S7"/>
    <property type="match status" value="1"/>
</dbReference>
<dbReference type="PROSITE" id="PS00052">
    <property type="entry name" value="RIBOSOMAL_S7"/>
    <property type="match status" value="1"/>
</dbReference>